<accession>B1Z2C1</accession>
<evidence type="ECO:0000255" key="1">
    <source>
        <dbReference type="HAMAP-Rule" id="MF_01584"/>
    </source>
</evidence>
<dbReference type="EMBL" id="CP001026">
    <property type="protein sequence ID" value="ACB67883.1"/>
    <property type="molecule type" value="Genomic_DNA"/>
</dbReference>
<dbReference type="RefSeq" id="WP_012367092.1">
    <property type="nucleotide sequence ID" value="NC_010552.1"/>
</dbReference>
<dbReference type="SMR" id="B1Z2C1"/>
<dbReference type="KEGG" id="bac:BamMC406_5439"/>
<dbReference type="HOGENOM" id="CLU_057831_0_0_4"/>
<dbReference type="OrthoDB" id="9784785at2"/>
<dbReference type="Proteomes" id="UP000001680">
    <property type="component" value="Chromosome 2"/>
</dbReference>
<dbReference type="Gene3D" id="1.10.10.10">
    <property type="entry name" value="Winged helix-like DNA-binding domain superfamily/Winged helix DNA-binding domain"/>
    <property type="match status" value="2"/>
</dbReference>
<dbReference type="HAMAP" id="MF_01584">
    <property type="entry name" value="UPF0502"/>
    <property type="match status" value="1"/>
</dbReference>
<dbReference type="InterPro" id="IPR007432">
    <property type="entry name" value="DUF480"/>
</dbReference>
<dbReference type="InterPro" id="IPR036388">
    <property type="entry name" value="WH-like_DNA-bd_sf"/>
</dbReference>
<dbReference type="InterPro" id="IPR036390">
    <property type="entry name" value="WH_DNA-bd_sf"/>
</dbReference>
<dbReference type="PANTHER" id="PTHR38768">
    <property type="entry name" value="UPF0502 PROTEIN YCEH"/>
    <property type="match status" value="1"/>
</dbReference>
<dbReference type="PANTHER" id="PTHR38768:SF1">
    <property type="entry name" value="UPF0502 PROTEIN YCEH"/>
    <property type="match status" value="1"/>
</dbReference>
<dbReference type="Pfam" id="PF04337">
    <property type="entry name" value="DUF480"/>
    <property type="match status" value="1"/>
</dbReference>
<dbReference type="SUPFAM" id="SSF46785">
    <property type="entry name" value="Winged helix' DNA-binding domain"/>
    <property type="match status" value="2"/>
</dbReference>
<organism>
    <name type="scientific">Burkholderia ambifaria (strain MC40-6)</name>
    <dbReference type="NCBI Taxonomy" id="398577"/>
    <lineage>
        <taxon>Bacteria</taxon>
        <taxon>Pseudomonadati</taxon>
        <taxon>Pseudomonadota</taxon>
        <taxon>Betaproteobacteria</taxon>
        <taxon>Burkholderiales</taxon>
        <taxon>Burkholderiaceae</taxon>
        <taxon>Burkholderia</taxon>
        <taxon>Burkholderia cepacia complex</taxon>
    </lineage>
</organism>
<proteinExistence type="inferred from homology"/>
<reference key="1">
    <citation type="submission" date="2008-04" db="EMBL/GenBank/DDBJ databases">
        <title>Complete sequence of chromosome 2 of Burkholderia ambifaria MC40-6.</title>
        <authorList>
            <person name="Copeland A."/>
            <person name="Lucas S."/>
            <person name="Lapidus A."/>
            <person name="Glavina del Rio T."/>
            <person name="Dalin E."/>
            <person name="Tice H."/>
            <person name="Pitluck S."/>
            <person name="Chain P."/>
            <person name="Malfatti S."/>
            <person name="Shin M."/>
            <person name="Vergez L."/>
            <person name="Lang D."/>
            <person name="Schmutz J."/>
            <person name="Larimer F."/>
            <person name="Land M."/>
            <person name="Hauser L."/>
            <person name="Kyrpides N."/>
            <person name="Lykidis A."/>
            <person name="Ramette A."/>
            <person name="Konstantinidis K."/>
            <person name="Tiedje J."/>
            <person name="Richardson P."/>
        </authorList>
    </citation>
    <scope>NUCLEOTIDE SEQUENCE [LARGE SCALE GENOMIC DNA]</scope>
    <source>
        <strain>MC40-6</strain>
    </source>
</reference>
<name>Y5439_BURA4</name>
<feature type="chain" id="PRO_1000201232" description="UPF0502 protein BamMC406_5439">
    <location>
        <begin position="1"/>
        <end position="236"/>
    </location>
</feature>
<sequence length="236" mass="25502">MNTTPDMPTPRALRELTPLEARILGVLVEKQHTVPDTYPLSLNALTAGCNQKTARSPVMNVSEDEVTTALDSLKHLSLVMEGSSSRVPRFEHNMNRVLGIPSQAIALLTILLLRGPQTAAELRLNSARLHGFADISSVEAFLDELAARAQPLVIRLPRAPGARENRWMHLMCGEVNVADFAGPDTGGGTDSVPPSEFEALKAEQKRLADEVARLNALVQRMATELGIDVDAPGDVS</sequence>
<protein>
    <recommendedName>
        <fullName evidence="1">UPF0502 protein BamMC406_5439</fullName>
    </recommendedName>
</protein>
<gene>
    <name type="ordered locus">BamMC406_5439</name>
</gene>
<comment type="similarity">
    <text evidence="1">Belongs to the UPF0502 family.</text>
</comment>